<dbReference type="EMBL" id="AF334484">
    <property type="protein sequence ID" value="AAK01725.1"/>
    <property type="molecule type" value="Genomic_DNA"/>
</dbReference>
<dbReference type="GO" id="GO:0005743">
    <property type="term" value="C:mitochondrial inner membrane"/>
    <property type="evidence" value="ECO:0007669"/>
    <property type="project" value="UniProtKB-SubCell"/>
</dbReference>
<dbReference type="GO" id="GO:0045275">
    <property type="term" value="C:respiratory chain complex III"/>
    <property type="evidence" value="ECO:0007669"/>
    <property type="project" value="InterPro"/>
</dbReference>
<dbReference type="GO" id="GO:0046872">
    <property type="term" value="F:metal ion binding"/>
    <property type="evidence" value="ECO:0007669"/>
    <property type="project" value="UniProtKB-KW"/>
</dbReference>
<dbReference type="GO" id="GO:0008121">
    <property type="term" value="F:ubiquinol-cytochrome-c reductase activity"/>
    <property type="evidence" value="ECO:0007669"/>
    <property type="project" value="InterPro"/>
</dbReference>
<dbReference type="GO" id="GO:0006122">
    <property type="term" value="P:mitochondrial electron transport, ubiquinol to cytochrome c"/>
    <property type="evidence" value="ECO:0007669"/>
    <property type="project" value="TreeGrafter"/>
</dbReference>
<dbReference type="CDD" id="cd00290">
    <property type="entry name" value="cytochrome_b_C"/>
    <property type="match status" value="1"/>
</dbReference>
<dbReference type="CDD" id="cd00284">
    <property type="entry name" value="Cytochrome_b_N"/>
    <property type="match status" value="1"/>
</dbReference>
<dbReference type="FunFam" id="1.20.810.10:FF:000002">
    <property type="entry name" value="Cytochrome b"/>
    <property type="match status" value="1"/>
</dbReference>
<dbReference type="Gene3D" id="1.20.810.10">
    <property type="entry name" value="Cytochrome Bc1 Complex, Chain C"/>
    <property type="match status" value="1"/>
</dbReference>
<dbReference type="InterPro" id="IPR005798">
    <property type="entry name" value="Cyt_b/b6_C"/>
</dbReference>
<dbReference type="InterPro" id="IPR036150">
    <property type="entry name" value="Cyt_b/b6_C_sf"/>
</dbReference>
<dbReference type="InterPro" id="IPR005797">
    <property type="entry name" value="Cyt_b/b6_N"/>
</dbReference>
<dbReference type="InterPro" id="IPR027387">
    <property type="entry name" value="Cytb/b6-like_sf"/>
</dbReference>
<dbReference type="InterPro" id="IPR030689">
    <property type="entry name" value="Cytochrome_b"/>
</dbReference>
<dbReference type="InterPro" id="IPR048260">
    <property type="entry name" value="Cytochrome_b_C_euk/bac"/>
</dbReference>
<dbReference type="InterPro" id="IPR048259">
    <property type="entry name" value="Cytochrome_b_N_euk/bac"/>
</dbReference>
<dbReference type="InterPro" id="IPR016174">
    <property type="entry name" value="Di-haem_cyt_TM"/>
</dbReference>
<dbReference type="PANTHER" id="PTHR19271">
    <property type="entry name" value="CYTOCHROME B"/>
    <property type="match status" value="1"/>
</dbReference>
<dbReference type="PANTHER" id="PTHR19271:SF16">
    <property type="entry name" value="CYTOCHROME B"/>
    <property type="match status" value="1"/>
</dbReference>
<dbReference type="Pfam" id="PF00032">
    <property type="entry name" value="Cytochrom_B_C"/>
    <property type="match status" value="1"/>
</dbReference>
<dbReference type="Pfam" id="PF00033">
    <property type="entry name" value="Cytochrome_B"/>
    <property type="match status" value="1"/>
</dbReference>
<dbReference type="PIRSF" id="PIRSF038885">
    <property type="entry name" value="COB"/>
    <property type="match status" value="1"/>
</dbReference>
<dbReference type="SUPFAM" id="SSF81648">
    <property type="entry name" value="a domain/subunit of cytochrome bc1 complex (Ubiquinol-cytochrome c reductase)"/>
    <property type="match status" value="1"/>
</dbReference>
<dbReference type="SUPFAM" id="SSF81342">
    <property type="entry name" value="Transmembrane di-heme cytochromes"/>
    <property type="match status" value="1"/>
</dbReference>
<dbReference type="PROSITE" id="PS51003">
    <property type="entry name" value="CYTB_CTER"/>
    <property type="match status" value="1"/>
</dbReference>
<dbReference type="PROSITE" id="PS51002">
    <property type="entry name" value="CYTB_NTER"/>
    <property type="match status" value="1"/>
</dbReference>
<geneLocation type="mitochondrion"/>
<organism>
    <name type="scientific">Tasmacetus shepherdi</name>
    <name type="common">Shepherd's beaked whale</name>
    <dbReference type="NCBI Taxonomy" id="52116"/>
    <lineage>
        <taxon>Eukaryota</taxon>
        <taxon>Metazoa</taxon>
        <taxon>Chordata</taxon>
        <taxon>Craniata</taxon>
        <taxon>Vertebrata</taxon>
        <taxon>Euteleostomi</taxon>
        <taxon>Mammalia</taxon>
        <taxon>Eutheria</taxon>
        <taxon>Laurasiatheria</taxon>
        <taxon>Artiodactyla</taxon>
        <taxon>Whippomorpha</taxon>
        <taxon>Cetacea</taxon>
        <taxon>Odontoceti</taxon>
        <taxon>Ziphiidae</taxon>
        <taxon>Tasmacetus</taxon>
    </lineage>
</organism>
<proteinExistence type="inferred from homology"/>
<evidence type="ECO:0000250" key="1"/>
<evidence type="ECO:0000250" key="2">
    <source>
        <dbReference type="UniProtKB" id="P00157"/>
    </source>
</evidence>
<evidence type="ECO:0000255" key="3">
    <source>
        <dbReference type="PROSITE-ProRule" id="PRU00967"/>
    </source>
</evidence>
<evidence type="ECO:0000255" key="4">
    <source>
        <dbReference type="PROSITE-ProRule" id="PRU00968"/>
    </source>
</evidence>
<sequence>MINIRKTHPLMKIINNTFIDLPTPANISSWWNFGSLLGLCLIMQILTGLFLAMHYTPDTATAFSSVTHICRDVNYGWIIRYLHANGASMFFICLYAHIGRGLYYGSYAFQETWNIGVILLFTVMATAFVGYVLPWGQMSFWGATVITNLLSAIPYIGTTXVEWVWGGFSVDKATLTRFFAFHFILPFIIXALAXVHLLFLHETGSNNPTGIPSBVDKIPFHPYCTIKDILGALLLILTLLTLTLFXPDLLGDPXNYTPANPLXTPXHXXPEXYFLFAYAILRSIPNKLGGVLALLLSILILXFIPMLHTSKQRSMXFXPXSQXXFWXLVADLLTLTWIGGQPVEHPYXXMGQLASILYFLLILVLMPMASXIENKLLKW</sequence>
<protein>
    <recommendedName>
        <fullName>Cytochrome b</fullName>
    </recommendedName>
    <alternativeName>
        <fullName>Complex III subunit 3</fullName>
    </alternativeName>
    <alternativeName>
        <fullName>Complex III subunit III</fullName>
    </alternativeName>
    <alternativeName>
        <fullName>Cytochrome b-c1 complex subunit 3</fullName>
    </alternativeName>
    <alternativeName>
        <fullName>Ubiquinol-cytochrome-c reductase complex cytochrome b subunit</fullName>
    </alternativeName>
</protein>
<comment type="function">
    <text evidence="2">Component of the ubiquinol-cytochrome c reductase complex (complex III or cytochrome b-c1 complex) that is part of the mitochondrial respiratory chain. The b-c1 complex mediates electron transfer from ubiquinol to cytochrome c. Contributes to the generation of a proton gradient across the mitochondrial membrane that is then used for ATP synthesis.</text>
</comment>
<comment type="cofactor">
    <cofactor evidence="2">
        <name>heme b</name>
        <dbReference type="ChEBI" id="CHEBI:60344"/>
    </cofactor>
    <text evidence="2">Binds 2 heme b groups non-covalently.</text>
</comment>
<comment type="subunit">
    <text evidence="2">The cytochrome bc1 complex contains 11 subunits: 3 respiratory subunits (MT-CYB, CYC1 and UQCRFS1), 2 core proteins (UQCRC1 and UQCRC2) and 6 low-molecular weight proteins (UQCRH/QCR6, UQCRB/QCR7, UQCRQ/QCR8, UQCR10/QCR9, UQCR11/QCR10 and a cleavage product of UQCRFS1). This cytochrome bc1 complex then forms a dimer.</text>
</comment>
<comment type="subcellular location">
    <subcellularLocation>
        <location evidence="2">Mitochondrion inner membrane</location>
        <topology evidence="2">Multi-pass membrane protein</topology>
    </subcellularLocation>
</comment>
<comment type="miscellaneous">
    <text evidence="1">Heme 1 (or BL or b562) is low-potential and absorbs at about 562 nm, and heme 2 (or BH or b566) is high-potential and absorbs at about 566 nm.</text>
</comment>
<comment type="similarity">
    <text evidence="3 4">Belongs to the cytochrome b family.</text>
</comment>
<comment type="caution">
    <text evidence="2">The full-length protein contains only eight transmembrane helices, not nine as predicted by bioinformatics tools.</text>
</comment>
<feature type="chain" id="PRO_0000254768" description="Cytochrome b">
    <location>
        <begin position="1"/>
        <end position="379"/>
    </location>
</feature>
<feature type="transmembrane region" description="Helical" evidence="2">
    <location>
        <begin position="33"/>
        <end position="53"/>
    </location>
</feature>
<feature type="transmembrane region" description="Helical" evidence="2">
    <location>
        <begin position="77"/>
        <end position="98"/>
    </location>
</feature>
<feature type="transmembrane region" description="Helical" evidence="2">
    <location>
        <begin position="113"/>
        <end position="133"/>
    </location>
</feature>
<feature type="transmembrane region" description="Helical" evidence="2">
    <location>
        <begin position="178"/>
        <end position="198"/>
    </location>
</feature>
<feature type="transmembrane region" description="Helical" evidence="2">
    <location>
        <begin position="226"/>
        <end position="246"/>
    </location>
</feature>
<feature type="transmembrane region" description="Helical" evidence="2">
    <location>
        <begin position="288"/>
        <end position="308"/>
    </location>
</feature>
<feature type="transmembrane region" description="Helical" evidence="2">
    <location>
        <begin position="320"/>
        <end position="340"/>
    </location>
</feature>
<feature type="transmembrane region" description="Helical" evidence="2">
    <location>
        <begin position="347"/>
        <end position="367"/>
    </location>
</feature>
<feature type="binding site" description="axial binding residue" evidence="2">
    <location>
        <position position="83"/>
    </location>
    <ligand>
        <name>heme b</name>
        <dbReference type="ChEBI" id="CHEBI:60344"/>
        <label>b562</label>
    </ligand>
    <ligandPart>
        <name>Fe</name>
        <dbReference type="ChEBI" id="CHEBI:18248"/>
    </ligandPart>
</feature>
<feature type="binding site" description="axial binding residue" evidence="2">
    <location>
        <position position="97"/>
    </location>
    <ligand>
        <name>heme b</name>
        <dbReference type="ChEBI" id="CHEBI:60344"/>
        <label>b566</label>
    </ligand>
    <ligandPart>
        <name>Fe</name>
        <dbReference type="ChEBI" id="CHEBI:18248"/>
    </ligandPart>
</feature>
<feature type="binding site" description="axial binding residue" evidence="2">
    <location>
        <position position="182"/>
    </location>
    <ligand>
        <name>heme b</name>
        <dbReference type="ChEBI" id="CHEBI:60344"/>
        <label>b562</label>
    </ligand>
    <ligandPart>
        <name>Fe</name>
        <dbReference type="ChEBI" id="CHEBI:18248"/>
    </ligandPart>
</feature>
<feature type="binding site" description="axial binding residue" evidence="2">
    <location>
        <position position="196"/>
    </location>
    <ligand>
        <name>heme b</name>
        <dbReference type="ChEBI" id="CHEBI:60344"/>
        <label>b566</label>
    </ligand>
    <ligandPart>
        <name>Fe</name>
        <dbReference type="ChEBI" id="CHEBI:18248"/>
    </ligandPart>
</feature>
<feature type="binding site" evidence="2">
    <location>
        <position position="201"/>
    </location>
    <ligand>
        <name>a ubiquinone</name>
        <dbReference type="ChEBI" id="CHEBI:16389"/>
    </ligand>
</feature>
<reference key="1">
    <citation type="journal article" date="2001" name="Proc. R. Soc. B">
        <title>Evolution of river dolphins.</title>
        <authorList>
            <person name="Hamilton H."/>
            <person name="Caballero S."/>
            <person name="Collins A.G."/>
            <person name="Brownell R.L. Jr."/>
        </authorList>
    </citation>
    <scope>NUCLEOTIDE SEQUENCE [GENOMIC DNA]</scope>
</reference>
<gene>
    <name type="primary">MT-CYB</name>
    <name type="synonym">COB</name>
    <name type="synonym">CYTB</name>
    <name type="synonym">MTCYB</name>
</gene>
<keyword id="KW-0249">Electron transport</keyword>
<keyword id="KW-0349">Heme</keyword>
<keyword id="KW-0408">Iron</keyword>
<keyword id="KW-0472">Membrane</keyword>
<keyword id="KW-0479">Metal-binding</keyword>
<keyword id="KW-0496">Mitochondrion</keyword>
<keyword id="KW-0999">Mitochondrion inner membrane</keyword>
<keyword id="KW-0679">Respiratory chain</keyword>
<keyword id="KW-0812">Transmembrane</keyword>
<keyword id="KW-1133">Transmembrane helix</keyword>
<keyword id="KW-0813">Transport</keyword>
<keyword id="KW-0830">Ubiquinone</keyword>
<name>CYB_TASSH</name>
<accession>Q9B7W1</accession>